<feature type="transit peptide" description="Chloroplast" evidence="2">
    <location>
        <begin position="1"/>
        <end position="55"/>
    </location>
</feature>
<feature type="chain" id="PRO_0000391072" description="Adenylate isopentenyltransferase 3, chloroplastic">
    <location>
        <begin position="56"/>
        <end position="333"/>
    </location>
</feature>
<feature type="propeptide" id="PRO_0000396781" description="Removed in mature form">
    <location>
        <begin position="334"/>
        <end position="336"/>
    </location>
</feature>
<feature type="binding site" evidence="2">
    <location>
        <begin position="48"/>
        <end position="55"/>
    </location>
    <ligand>
        <name>ATP</name>
        <dbReference type="ChEBI" id="CHEBI:30616"/>
    </ligand>
</feature>
<feature type="modified residue" description="Cysteine methyl ester" evidence="1">
    <location>
        <position position="333"/>
    </location>
</feature>
<feature type="lipid moiety-binding region" description="S-farnesyl cysteine" evidence="9">
    <location>
        <position position="333"/>
    </location>
</feature>
<feature type="mutagenesis site" description="Loss of farnesylation and decreased catalytic activity." evidence="9">
    <original>C</original>
    <variation>S</variation>
    <location>
        <position position="333"/>
    </location>
</feature>
<gene>
    <name type="primary">IPT3</name>
    <name type="ordered locus">At3g63110</name>
    <name type="ORF">T20O10.210</name>
</gene>
<comment type="function">
    <text evidence="3 7 8">Involved in cytokinin biosynthesis. Catalyzes the transfer of an isopentenyl group from dimethylallyl diphosphate (DMAPP) to ATP and ADP.</text>
</comment>
<comment type="catalytic activity">
    <reaction>
        <text>dimethylallyl diphosphate + ADP = N(6)-(dimethylallyl)adenosine 5'-diphosphate + diphosphate</text>
        <dbReference type="Rhea" id="RHEA:36327"/>
        <dbReference type="ChEBI" id="CHEBI:33019"/>
        <dbReference type="ChEBI" id="CHEBI:57623"/>
        <dbReference type="ChEBI" id="CHEBI:73533"/>
        <dbReference type="ChEBI" id="CHEBI:456216"/>
        <dbReference type="EC" id="2.5.1.112"/>
    </reaction>
</comment>
<comment type="catalytic activity">
    <reaction>
        <text>dimethylallyl diphosphate + ATP = N(6)-(dimethylallyl)adenosine 5'-triphosphate + diphosphate</text>
        <dbReference type="Rhea" id="RHEA:36331"/>
        <dbReference type="ChEBI" id="CHEBI:30616"/>
        <dbReference type="ChEBI" id="CHEBI:33019"/>
        <dbReference type="ChEBI" id="CHEBI:57623"/>
        <dbReference type="ChEBI" id="CHEBI:73532"/>
        <dbReference type="EC" id="2.5.1.112"/>
    </reaction>
</comment>
<comment type="subcellular location">
    <subcellularLocation>
        <location evidence="5">Plastid</location>
        <location evidence="5">Chloroplast</location>
    </subcellularLocation>
    <subcellularLocation>
        <location evidence="9">Nucleus membrane</location>
        <topology evidence="9">Lipid-anchor</topology>
    </subcellularLocation>
    <subcellularLocation>
        <location evidence="9">Cytoplasm</location>
    </subcellularLocation>
    <text>Farnesylation directs most of the protein to the nucleus/cytoplasm despite the presence of a chloroplast transit peptide (PubMed:18184738).</text>
</comment>
<comment type="tissue specificity">
    <text evidence="4 6">Expressed the phloem companion cells.</text>
</comment>
<comment type="induction">
    <text evidence="4 6">Down-regulated by cytokinins and up-regulated by nitrate, but not by ammonium.</text>
</comment>
<comment type="PTM">
    <text>Farnesylated.</text>
</comment>
<comment type="disruption phenotype">
    <text evidence="8 10">No visible phenotype except some decreased root thickening, due the redundancy with other IPTs.</text>
</comment>
<comment type="similarity">
    <text evidence="11">Belongs to the IPP transferase family.</text>
</comment>
<comment type="sequence caution" evidence="11">
    <conflict type="erroneous initiation">
        <sequence resource="EMBL-CDS" id="CAB87756"/>
    </conflict>
</comment>
<accession>Q93WC9</accession>
<accession>Q9LYB1</accession>
<dbReference type="EC" id="2.5.1.112"/>
<dbReference type="EMBL" id="AB062610">
    <property type="protein sequence ID" value="BAB59043.1"/>
    <property type="molecule type" value="mRNA"/>
</dbReference>
<dbReference type="EMBL" id="AB061401">
    <property type="protein sequence ID" value="BAB59030.1"/>
    <property type="molecule type" value="mRNA"/>
</dbReference>
<dbReference type="EMBL" id="AL163816">
    <property type="protein sequence ID" value="CAB87756.1"/>
    <property type="status" value="ALT_INIT"/>
    <property type="molecule type" value="Genomic_DNA"/>
</dbReference>
<dbReference type="EMBL" id="CP002686">
    <property type="protein sequence ID" value="AEE80436.1"/>
    <property type="molecule type" value="Genomic_DNA"/>
</dbReference>
<dbReference type="EMBL" id="AY125508">
    <property type="protein sequence ID" value="AAM78100.1"/>
    <property type="molecule type" value="mRNA"/>
</dbReference>
<dbReference type="EMBL" id="BT001075">
    <property type="protein sequence ID" value="AAN46854.1"/>
    <property type="molecule type" value="mRNA"/>
</dbReference>
<dbReference type="PIR" id="T48100">
    <property type="entry name" value="T48100"/>
</dbReference>
<dbReference type="RefSeq" id="NP_567138.1">
    <property type="nucleotide sequence ID" value="NM_116176.3"/>
</dbReference>
<dbReference type="SMR" id="Q93WC9"/>
<dbReference type="STRING" id="3702.Q93WC9"/>
<dbReference type="iPTMnet" id="Q93WC9"/>
<dbReference type="PaxDb" id="3702-AT3G63110.1"/>
<dbReference type="EnsemblPlants" id="AT3G63110.1">
    <property type="protein sequence ID" value="AT3G63110.1"/>
    <property type="gene ID" value="AT3G63110"/>
</dbReference>
<dbReference type="GeneID" id="825486"/>
<dbReference type="Gramene" id="AT3G63110.1">
    <property type="protein sequence ID" value="AT3G63110.1"/>
    <property type="gene ID" value="AT3G63110"/>
</dbReference>
<dbReference type="KEGG" id="ath:AT3G63110"/>
<dbReference type="Araport" id="AT3G63110"/>
<dbReference type="TAIR" id="AT3G63110">
    <property type="gene designation" value="IPT3"/>
</dbReference>
<dbReference type="eggNOG" id="KOG1384">
    <property type="taxonomic scope" value="Eukaryota"/>
</dbReference>
<dbReference type="HOGENOM" id="CLU_032616_4_1_1"/>
<dbReference type="InParanoid" id="Q93WC9"/>
<dbReference type="OMA" id="CGIPHHM"/>
<dbReference type="PhylomeDB" id="Q93WC9"/>
<dbReference type="BioCyc" id="ARA:AT3G63110-MONOMER"/>
<dbReference type="BioCyc" id="MetaCyc:AT3G63110-MONOMER"/>
<dbReference type="BRENDA" id="2.5.1.112">
    <property type="organism ID" value="399"/>
</dbReference>
<dbReference type="PRO" id="PR:Q93WC9"/>
<dbReference type="Proteomes" id="UP000006548">
    <property type="component" value="Chromosome 3"/>
</dbReference>
<dbReference type="ExpressionAtlas" id="Q93WC9">
    <property type="expression patterns" value="baseline and differential"/>
</dbReference>
<dbReference type="GO" id="GO:0009507">
    <property type="term" value="C:chloroplast"/>
    <property type="evidence" value="ECO:0007669"/>
    <property type="project" value="UniProtKB-SubCell"/>
</dbReference>
<dbReference type="GO" id="GO:0031965">
    <property type="term" value="C:nuclear membrane"/>
    <property type="evidence" value="ECO:0007669"/>
    <property type="project" value="UniProtKB-SubCell"/>
</dbReference>
<dbReference type="GO" id="GO:0005634">
    <property type="term" value="C:nucleus"/>
    <property type="evidence" value="ECO:0000314"/>
    <property type="project" value="TAIR"/>
</dbReference>
<dbReference type="GO" id="GO:0009536">
    <property type="term" value="C:plastid"/>
    <property type="evidence" value="ECO:0000314"/>
    <property type="project" value="UniProtKB"/>
</dbReference>
<dbReference type="GO" id="GO:0009824">
    <property type="term" value="F:AMP dimethylallyltransferase activity"/>
    <property type="evidence" value="ECO:0000315"/>
    <property type="project" value="TAIR"/>
</dbReference>
<dbReference type="GO" id="GO:0005524">
    <property type="term" value="F:ATP binding"/>
    <property type="evidence" value="ECO:0007669"/>
    <property type="project" value="UniProtKB-KW"/>
</dbReference>
<dbReference type="GO" id="GO:0052622">
    <property type="term" value="F:ATP/ADP dimethylallyltransferase activity"/>
    <property type="evidence" value="ECO:0000250"/>
    <property type="project" value="TAIR"/>
</dbReference>
<dbReference type="GO" id="GO:0009691">
    <property type="term" value="P:cytokinin biosynthetic process"/>
    <property type="evidence" value="ECO:0000315"/>
    <property type="project" value="TAIR"/>
</dbReference>
<dbReference type="FunFam" id="1.10.287.890:FF:000002">
    <property type="entry name" value="Adenylate isopentenyltransferase 5, chloroplastic"/>
    <property type="match status" value="1"/>
</dbReference>
<dbReference type="FunFam" id="3.40.50.300:FF:000816">
    <property type="entry name" value="Adenylate isopentenyltransferase 5, chloroplastic"/>
    <property type="match status" value="1"/>
</dbReference>
<dbReference type="Gene3D" id="1.10.287.890">
    <property type="entry name" value="Crystal structure of tRNA isopentenylpyrophosphate transferase (bh2366) domain"/>
    <property type="match status" value="1"/>
</dbReference>
<dbReference type="Gene3D" id="3.40.50.300">
    <property type="entry name" value="P-loop containing nucleotide triphosphate hydrolases"/>
    <property type="match status" value="1"/>
</dbReference>
<dbReference type="InterPro" id="IPR039657">
    <property type="entry name" value="Dimethylallyltransferase"/>
</dbReference>
<dbReference type="InterPro" id="IPR027417">
    <property type="entry name" value="P-loop_NTPase"/>
</dbReference>
<dbReference type="PANTHER" id="PTHR11088:SF91">
    <property type="entry name" value="ADENYLATE ISOPENTENYLTRANSFERASE 3, CHLOROPLASTIC"/>
    <property type="match status" value="1"/>
</dbReference>
<dbReference type="PANTHER" id="PTHR11088">
    <property type="entry name" value="TRNA DIMETHYLALLYLTRANSFERASE"/>
    <property type="match status" value="1"/>
</dbReference>
<dbReference type="Pfam" id="PF01715">
    <property type="entry name" value="IPPT"/>
    <property type="match status" value="2"/>
</dbReference>
<dbReference type="SUPFAM" id="SSF52540">
    <property type="entry name" value="P-loop containing nucleoside triphosphate hydrolases"/>
    <property type="match status" value="1"/>
</dbReference>
<protein>
    <recommendedName>
        <fullName>Adenylate isopentenyltransferase 3, chloroplastic</fullName>
        <shortName>AtIPT3</shortName>
        <ecNumber>2.5.1.112</ecNumber>
    </recommendedName>
    <alternativeName>
        <fullName>Adenylate dimethylallyltransferase 3</fullName>
    </alternativeName>
    <alternativeName>
        <fullName>Cytokinin synthase 3</fullName>
    </alternativeName>
</protein>
<evidence type="ECO:0000250" key="1"/>
<evidence type="ECO:0000255" key="2"/>
<evidence type="ECO:0000269" key="3">
    <source>
    </source>
</evidence>
<evidence type="ECO:0000269" key="4">
    <source>
    </source>
</evidence>
<evidence type="ECO:0000269" key="5">
    <source>
    </source>
</evidence>
<evidence type="ECO:0000269" key="6">
    <source>
    </source>
</evidence>
<evidence type="ECO:0000269" key="7">
    <source>
    </source>
</evidence>
<evidence type="ECO:0000269" key="8">
    <source>
    </source>
</evidence>
<evidence type="ECO:0000269" key="9">
    <source>
    </source>
</evidence>
<evidence type="ECO:0000269" key="10">
    <source>
    </source>
</evidence>
<evidence type="ECO:0000305" key="11"/>
<organism>
    <name type="scientific">Arabidopsis thaliana</name>
    <name type="common">Mouse-ear cress</name>
    <dbReference type="NCBI Taxonomy" id="3702"/>
    <lineage>
        <taxon>Eukaryota</taxon>
        <taxon>Viridiplantae</taxon>
        <taxon>Streptophyta</taxon>
        <taxon>Embryophyta</taxon>
        <taxon>Tracheophyta</taxon>
        <taxon>Spermatophyta</taxon>
        <taxon>Magnoliopsida</taxon>
        <taxon>eudicotyledons</taxon>
        <taxon>Gunneridae</taxon>
        <taxon>Pentapetalae</taxon>
        <taxon>rosids</taxon>
        <taxon>malvids</taxon>
        <taxon>Brassicales</taxon>
        <taxon>Brassicaceae</taxon>
        <taxon>Camelineae</taxon>
        <taxon>Arabidopsis</taxon>
    </lineage>
</organism>
<sequence length="336" mass="37915">MIMKISMAMCKQPLPPSPTLDFPPARFGPNMLTLNPYGPKDKVVVIMGATGTGKSRLSVDIATRFRAEIINSDKIQVHQGLDIVTNKITSEESCGVPHHLLGVLPPEADLTAANYCHMANLSIESVLNRGKLPIIVGGSNSYVEALVDDKENKFRSRYDCCFLWVDVALPVLHGFVSERVDKMVESGMVEEVREFFDFSNSDYSRGIKKAIGFPEFDRFFRNEQFLNVEDREELLSKVLEEIKRNTFELACRQREKIERLRKVKKWSIQRVDATPVFTKRRSKMDANVAWERLVAGPSTDTVSRFLLDIASRRPLVEASTAVAAAMERELSRCLVA</sequence>
<proteinExistence type="evidence at protein level"/>
<name>IPT3_ARATH</name>
<keyword id="KW-0067">ATP-binding</keyword>
<keyword id="KW-0150">Chloroplast</keyword>
<keyword id="KW-0203">Cytokinin biosynthesis</keyword>
<keyword id="KW-0963">Cytoplasm</keyword>
<keyword id="KW-0449">Lipoprotein</keyword>
<keyword id="KW-0472">Membrane</keyword>
<keyword id="KW-0488">Methylation</keyword>
<keyword id="KW-0547">Nucleotide-binding</keyword>
<keyword id="KW-0539">Nucleus</keyword>
<keyword id="KW-0934">Plastid</keyword>
<keyword id="KW-0636">Prenylation</keyword>
<keyword id="KW-1185">Reference proteome</keyword>
<keyword id="KW-0808">Transferase</keyword>
<keyword id="KW-0809">Transit peptide</keyword>
<reference key="1">
    <citation type="journal article" date="2001" name="J. Biol. Chem.">
        <title>Identification of genes encoding adenylate isopentenyltransferase, a cytokinin biosynthesis enzyme, in Arabidopsis thaliana.</title>
        <authorList>
            <person name="Takei K."/>
            <person name="Sakakibara H."/>
            <person name="Sugiyama T."/>
        </authorList>
    </citation>
    <scope>NUCLEOTIDE SEQUENCE [MRNA]</scope>
    <scope>FUNCTION</scope>
    <scope>GENE FAMILY</scope>
    <source>
        <strain>cv. Columbia</strain>
    </source>
</reference>
<reference key="2">
    <citation type="journal article" date="2001" name="Plant Cell Physiol.">
        <title>Identification of plant cytokinin biosynthetic enzymes as dimethylallyl diphosphate:ATP/ADP isopentenyltransferases.</title>
        <authorList>
            <person name="Kakimoto T."/>
        </authorList>
    </citation>
    <scope>NUCLEOTIDE SEQUENCE [MRNA]</scope>
    <scope>GENE FAMILY</scope>
    <source>
        <strain>cv. Wassilewskija</strain>
    </source>
</reference>
<reference key="3">
    <citation type="journal article" date="2000" name="Nature">
        <title>Sequence and analysis of chromosome 3 of the plant Arabidopsis thaliana.</title>
        <authorList>
            <person name="Salanoubat M."/>
            <person name="Lemcke K."/>
            <person name="Rieger M."/>
            <person name="Ansorge W."/>
            <person name="Unseld M."/>
            <person name="Fartmann B."/>
            <person name="Valle G."/>
            <person name="Bloecker H."/>
            <person name="Perez-Alonso M."/>
            <person name="Obermaier B."/>
            <person name="Delseny M."/>
            <person name="Boutry M."/>
            <person name="Grivell L.A."/>
            <person name="Mache R."/>
            <person name="Puigdomenech P."/>
            <person name="De Simone V."/>
            <person name="Choisne N."/>
            <person name="Artiguenave F."/>
            <person name="Robert C."/>
            <person name="Brottier P."/>
            <person name="Wincker P."/>
            <person name="Cattolico L."/>
            <person name="Weissenbach J."/>
            <person name="Saurin W."/>
            <person name="Quetier F."/>
            <person name="Schaefer M."/>
            <person name="Mueller-Auer S."/>
            <person name="Gabel C."/>
            <person name="Fuchs M."/>
            <person name="Benes V."/>
            <person name="Wurmbach E."/>
            <person name="Drzonek H."/>
            <person name="Erfle H."/>
            <person name="Jordan N."/>
            <person name="Bangert S."/>
            <person name="Wiedelmann R."/>
            <person name="Kranz H."/>
            <person name="Voss H."/>
            <person name="Holland R."/>
            <person name="Brandt P."/>
            <person name="Nyakatura G."/>
            <person name="Vezzi A."/>
            <person name="D'Angelo M."/>
            <person name="Pallavicini A."/>
            <person name="Toppo S."/>
            <person name="Simionati B."/>
            <person name="Conrad A."/>
            <person name="Hornischer K."/>
            <person name="Kauer G."/>
            <person name="Loehnert T.-H."/>
            <person name="Nordsiek G."/>
            <person name="Reichelt J."/>
            <person name="Scharfe M."/>
            <person name="Schoen O."/>
            <person name="Bargues M."/>
            <person name="Terol J."/>
            <person name="Climent J."/>
            <person name="Navarro P."/>
            <person name="Collado C."/>
            <person name="Perez-Perez A."/>
            <person name="Ottenwaelder B."/>
            <person name="Duchemin D."/>
            <person name="Cooke R."/>
            <person name="Laudie M."/>
            <person name="Berger-Llauro C."/>
            <person name="Purnelle B."/>
            <person name="Masuy D."/>
            <person name="de Haan M."/>
            <person name="Maarse A.C."/>
            <person name="Alcaraz J.-P."/>
            <person name="Cottet A."/>
            <person name="Casacuberta E."/>
            <person name="Monfort A."/>
            <person name="Argiriou A."/>
            <person name="Flores M."/>
            <person name="Liguori R."/>
            <person name="Vitale D."/>
            <person name="Mannhaupt G."/>
            <person name="Haase D."/>
            <person name="Schoof H."/>
            <person name="Rudd S."/>
            <person name="Zaccaria P."/>
            <person name="Mewes H.-W."/>
            <person name="Mayer K.F.X."/>
            <person name="Kaul S."/>
            <person name="Town C.D."/>
            <person name="Koo H.L."/>
            <person name="Tallon L.J."/>
            <person name="Jenkins J."/>
            <person name="Rooney T."/>
            <person name="Rizzo M."/>
            <person name="Walts A."/>
            <person name="Utterback T."/>
            <person name="Fujii C.Y."/>
            <person name="Shea T.P."/>
            <person name="Creasy T.H."/>
            <person name="Haas B."/>
            <person name="Maiti R."/>
            <person name="Wu D."/>
            <person name="Peterson J."/>
            <person name="Van Aken S."/>
            <person name="Pai G."/>
            <person name="Militscher J."/>
            <person name="Sellers P."/>
            <person name="Gill J.E."/>
            <person name="Feldblyum T.V."/>
            <person name="Preuss D."/>
            <person name="Lin X."/>
            <person name="Nierman W.C."/>
            <person name="Salzberg S.L."/>
            <person name="White O."/>
            <person name="Venter J.C."/>
            <person name="Fraser C.M."/>
            <person name="Kaneko T."/>
            <person name="Nakamura Y."/>
            <person name="Sato S."/>
            <person name="Kato T."/>
            <person name="Asamizu E."/>
            <person name="Sasamoto S."/>
            <person name="Kimura T."/>
            <person name="Idesawa K."/>
            <person name="Kawashima K."/>
            <person name="Kishida Y."/>
            <person name="Kiyokawa C."/>
            <person name="Kohara M."/>
            <person name="Matsumoto M."/>
            <person name="Matsuno A."/>
            <person name="Muraki A."/>
            <person name="Nakayama S."/>
            <person name="Nakazaki N."/>
            <person name="Shinpo S."/>
            <person name="Takeuchi C."/>
            <person name="Wada T."/>
            <person name="Watanabe A."/>
            <person name="Yamada M."/>
            <person name="Yasuda M."/>
            <person name="Tabata S."/>
        </authorList>
    </citation>
    <scope>NUCLEOTIDE SEQUENCE [LARGE SCALE GENOMIC DNA]</scope>
    <source>
        <strain>cv. Columbia</strain>
    </source>
</reference>
<reference key="4">
    <citation type="journal article" date="2017" name="Plant J.">
        <title>Araport11: a complete reannotation of the Arabidopsis thaliana reference genome.</title>
        <authorList>
            <person name="Cheng C.Y."/>
            <person name="Krishnakumar V."/>
            <person name="Chan A.P."/>
            <person name="Thibaud-Nissen F."/>
            <person name="Schobel S."/>
            <person name="Town C.D."/>
        </authorList>
    </citation>
    <scope>GENOME REANNOTATION</scope>
    <source>
        <strain>cv. Columbia</strain>
    </source>
</reference>
<reference key="5">
    <citation type="journal article" date="2003" name="Science">
        <title>Empirical analysis of transcriptional activity in the Arabidopsis genome.</title>
        <authorList>
            <person name="Yamada K."/>
            <person name="Lim J."/>
            <person name="Dale J.M."/>
            <person name="Chen H."/>
            <person name="Shinn P."/>
            <person name="Palm C.J."/>
            <person name="Southwick A.M."/>
            <person name="Wu H.C."/>
            <person name="Kim C.J."/>
            <person name="Nguyen M."/>
            <person name="Pham P.K."/>
            <person name="Cheuk R.F."/>
            <person name="Karlin-Newmann G."/>
            <person name="Liu S.X."/>
            <person name="Lam B."/>
            <person name="Sakano H."/>
            <person name="Wu T."/>
            <person name="Yu G."/>
            <person name="Miranda M."/>
            <person name="Quach H.L."/>
            <person name="Tripp M."/>
            <person name="Chang C.H."/>
            <person name="Lee J.M."/>
            <person name="Toriumi M.J."/>
            <person name="Chan M.M."/>
            <person name="Tang C.C."/>
            <person name="Onodera C.S."/>
            <person name="Deng J.M."/>
            <person name="Akiyama K."/>
            <person name="Ansari Y."/>
            <person name="Arakawa T."/>
            <person name="Banh J."/>
            <person name="Banno F."/>
            <person name="Bowser L."/>
            <person name="Brooks S.Y."/>
            <person name="Carninci P."/>
            <person name="Chao Q."/>
            <person name="Choy N."/>
            <person name="Enju A."/>
            <person name="Goldsmith A.D."/>
            <person name="Gurjal M."/>
            <person name="Hansen N.F."/>
            <person name="Hayashizaki Y."/>
            <person name="Johnson-Hopson C."/>
            <person name="Hsuan V.W."/>
            <person name="Iida K."/>
            <person name="Karnes M."/>
            <person name="Khan S."/>
            <person name="Koesema E."/>
            <person name="Ishida J."/>
            <person name="Jiang P.X."/>
            <person name="Jones T."/>
            <person name="Kawai J."/>
            <person name="Kamiya A."/>
            <person name="Meyers C."/>
            <person name="Nakajima M."/>
            <person name="Narusaka M."/>
            <person name="Seki M."/>
            <person name="Sakurai T."/>
            <person name="Satou M."/>
            <person name="Tamse R."/>
            <person name="Vaysberg M."/>
            <person name="Wallender E.K."/>
            <person name="Wong C."/>
            <person name="Yamamura Y."/>
            <person name="Yuan S."/>
            <person name="Shinozaki K."/>
            <person name="Davis R.W."/>
            <person name="Theologis A."/>
            <person name="Ecker J.R."/>
        </authorList>
    </citation>
    <scope>NUCLEOTIDE SEQUENCE [LARGE SCALE MRNA]</scope>
    <source>
        <strain>cv. Columbia</strain>
    </source>
</reference>
<reference key="6">
    <citation type="journal article" date="2004" name="J. Biol. Chem.">
        <title>Distinct isoprenoid origins of cis- and trans-zeatin biosyntheses in Arabidopsis.</title>
        <authorList>
            <person name="Kasahara H."/>
            <person name="Takei K."/>
            <person name="Ueda N."/>
            <person name="Hishiyama S."/>
            <person name="Yamaya T."/>
            <person name="Kamiya Y."/>
            <person name="Yamaguchi S."/>
            <person name="Sakakibara H."/>
        </authorList>
    </citation>
    <scope>SUBCELLULAR LOCATION</scope>
</reference>
<reference key="7">
    <citation type="journal article" date="2004" name="Plant Cell Physiol.">
        <title>AtIPT3 is a key determinant of nitrate-dependent cytokinin biosynthesis in Arabidopsis.</title>
        <authorList>
            <person name="Takei K."/>
            <person name="Ueda N."/>
            <person name="Aoki K."/>
            <person name="Kuromori T."/>
            <person name="Hirayama T."/>
            <person name="Shinozaki K."/>
            <person name="Yamaya T."/>
            <person name="Sakakibara H."/>
        </authorList>
    </citation>
    <scope>TISSUE SPECIFICITY</scope>
    <scope>INDUCTION</scope>
</reference>
<reference key="8">
    <citation type="journal article" date="2004" name="Plant J.">
        <title>Expression of cytokinin biosynthetic isopentenyltransferase genes in Arabidopsis: tissue specificity and regulation by auxin, cytokinin, and nitrate.</title>
        <authorList>
            <person name="Miyawaki K."/>
            <person name="Matsumoto-Kitano M."/>
            <person name="Kakimoto T."/>
        </authorList>
    </citation>
    <scope>TISSUE SPECIFICITY</scope>
    <scope>INDUCTION</scope>
</reference>
<reference key="9">
    <citation type="journal article" date="2005" name="Proc. Natl. Acad. Sci. U.S.A.">
        <title>Agrobacterium tumefaciens increases cytokinin production in plastids by modifying the biosynthetic pathway in the host plant.</title>
        <authorList>
            <person name="Sakakibara H."/>
            <person name="Kasahara H."/>
            <person name="Ueda N."/>
            <person name="Kojima M."/>
            <person name="Takei K."/>
            <person name="Hishiyama S."/>
            <person name="Asami T."/>
            <person name="Okada K."/>
            <person name="Kamiya Y."/>
            <person name="Yamaya T."/>
            <person name="Yamaguchi S."/>
        </authorList>
    </citation>
    <scope>FUNCTION</scope>
</reference>
<reference key="10">
    <citation type="journal article" date="2006" name="Proc. Natl. Acad. Sci. U.S.A.">
        <title>Roles of Arabidopsis ATP/ADP isopentenyltransferases and tRNA isopentenyltransferases in cytokinin biosynthesis.</title>
        <authorList>
            <person name="Miyawaki K."/>
            <person name="Tarkowski P."/>
            <person name="Matsumoto-Kitano M."/>
            <person name="Kato T."/>
            <person name="Sato S."/>
            <person name="Tarkowska D."/>
            <person name="Tabata S."/>
            <person name="Sandberg G."/>
            <person name="Kakimoto T."/>
        </authorList>
    </citation>
    <scope>FUNCTION</scope>
    <scope>DISRUPTION PHENOTYPE</scope>
</reference>
<reference key="11">
    <citation type="journal article" date="2008" name="Plant Physiol.">
        <title>Farnesylation directs AtIPT3 subcellular localization and modulates cytokinin biosynthesis in Arabidopsis.</title>
        <authorList>
            <person name="Galichet A."/>
            <person name="Hoyerova K."/>
            <person name="Kaminek M."/>
            <person name="Gruissem W."/>
        </authorList>
    </citation>
    <scope>SUBCELLULAR LOCATION</scope>
    <scope>MUTAGENESIS OF CYS-333</scope>
    <scope>ISOPRENYLATION AT CYS-333</scope>
</reference>
<reference key="12">
    <citation type="journal article" date="2008" name="Proc. Natl. Acad. Sci. U.S.A.">
        <title>Cytokinins are central regulators of cambial activity.</title>
        <authorList>
            <person name="Matsumoto-Kitano M."/>
            <person name="Kusumoto T."/>
            <person name="Tarkowski P."/>
            <person name="Kinoshita-Tsujimura K."/>
            <person name="Vaclavikova K."/>
            <person name="Miyawaki K."/>
            <person name="Kakimoto T."/>
        </authorList>
    </citation>
    <scope>DISRUPTION PHENOTYPE</scope>
</reference>